<accession>A9A885</accession>
<protein>
    <recommendedName>
        <fullName evidence="1">Glycine--tRNA ligase</fullName>
        <ecNumber evidence="1">6.1.1.14</ecNumber>
    </recommendedName>
    <alternativeName>
        <fullName evidence="1">Glycyl-tRNA synthetase</fullName>
        <shortName evidence="1">GlyRS</shortName>
    </alternativeName>
</protein>
<gene>
    <name evidence="1" type="primary">glyS</name>
    <name type="ordered locus">MmarC6_0741</name>
</gene>
<name>SYG_METM6</name>
<evidence type="ECO:0000255" key="1">
    <source>
        <dbReference type="HAMAP-Rule" id="MF_00253"/>
    </source>
</evidence>
<keyword id="KW-0030">Aminoacyl-tRNA synthetase</keyword>
<keyword id="KW-0067">ATP-binding</keyword>
<keyword id="KW-0963">Cytoplasm</keyword>
<keyword id="KW-0436">Ligase</keyword>
<keyword id="KW-0547">Nucleotide-binding</keyword>
<keyword id="KW-0648">Protein biosynthesis</keyword>
<sequence>MDKYDKIIDLTKRRGFLWNSFEIYGGIAGFFDYGPLGAILKNNVINTWRKHYIVNEGFYEIDSPTVTPYEVLKASGHVENFTDPLVECKGCLESFRADHIIEENVDVDTEGKTLQELQEMIEKNNIKCPKCGGEFKDVSTFNLMFATSIGPGGKRAAFMRPETAQGIFIQFKRISQFFRNKLPFGAVQIGKAYRNEISPRQGVIRLREFTQAEGEFFIDSRKKENFEKFESVKDTVLPLLSGKNQENESLSAEEKIVRMSLSDAVKNGIIAHEAIAYYIAVTKKFLMEIGIDESKLRFRQHLPNEMAHYAADCWDAELYTDRYGWIECVGIADRTNYDLLAHMKNSGEDLSVFVELDEEHEIEAYEIELNYKLVGRTFKGDAKVLEESLKELDDKKMEELVEALETEGKYTLKTCKRDFELLKEYLTAKKVKKIVKGEKIIPHVIEPSYGIDRITYCVMEHAFKEEEDRTVMGFSNAVSPIKVGVFPLVNKEGMPEIAMDLKNKLRENGLIAEYDDSGAIGRRYMRMDEVGTPFCITIDGETLVDNSVTIRERDSRAQFRIPINEVVSYIKDKL</sequence>
<dbReference type="EC" id="6.1.1.14" evidence="1"/>
<dbReference type="EMBL" id="CP000867">
    <property type="protein sequence ID" value="ABX01558.1"/>
    <property type="molecule type" value="Genomic_DNA"/>
</dbReference>
<dbReference type="SMR" id="A9A885"/>
<dbReference type="STRING" id="444158.MmarC6_0741"/>
<dbReference type="KEGG" id="mmx:MmarC6_0741"/>
<dbReference type="eggNOG" id="arCOG00405">
    <property type="taxonomic scope" value="Archaea"/>
</dbReference>
<dbReference type="HOGENOM" id="CLU_015515_1_2_2"/>
<dbReference type="OrthoDB" id="6113at2157"/>
<dbReference type="PhylomeDB" id="A9A885"/>
<dbReference type="GO" id="GO:0005737">
    <property type="term" value="C:cytoplasm"/>
    <property type="evidence" value="ECO:0007669"/>
    <property type="project" value="UniProtKB-SubCell"/>
</dbReference>
<dbReference type="GO" id="GO:0005524">
    <property type="term" value="F:ATP binding"/>
    <property type="evidence" value="ECO:0007669"/>
    <property type="project" value="UniProtKB-UniRule"/>
</dbReference>
<dbReference type="GO" id="GO:0004820">
    <property type="term" value="F:glycine-tRNA ligase activity"/>
    <property type="evidence" value="ECO:0000250"/>
    <property type="project" value="UniProtKB"/>
</dbReference>
<dbReference type="GO" id="GO:0046983">
    <property type="term" value="F:protein dimerization activity"/>
    <property type="evidence" value="ECO:0000250"/>
    <property type="project" value="UniProtKB"/>
</dbReference>
<dbReference type="GO" id="GO:0006426">
    <property type="term" value="P:glycyl-tRNA aminoacylation"/>
    <property type="evidence" value="ECO:0007669"/>
    <property type="project" value="UniProtKB-UniRule"/>
</dbReference>
<dbReference type="CDD" id="cd00774">
    <property type="entry name" value="GlyRS-like_core"/>
    <property type="match status" value="1"/>
</dbReference>
<dbReference type="CDD" id="cd00858">
    <property type="entry name" value="GlyRS_anticodon"/>
    <property type="match status" value="1"/>
</dbReference>
<dbReference type="FunFam" id="3.30.40.230:FF:000005">
    <property type="entry name" value="Glycine--tRNA ligase"/>
    <property type="match status" value="1"/>
</dbReference>
<dbReference type="FunFam" id="3.40.50.800:FF:000002">
    <property type="entry name" value="Glycine--tRNA ligase"/>
    <property type="match status" value="1"/>
</dbReference>
<dbReference type="FunFam" id="3.30.720.200:FF:000001">
    <property type="entry name" value="Glycine--tRNA ligase 2"/>
    <property type="match status" value="1"/>
</dbReference>
<dbReference type="Gene3D" id="3.30.40.230">
    <property type="match status" value="1"/>
</dbReference>
<dbReference type="Gene3D" id="3.30.720.200">
    <property type="match status" value="1"/>
</dbReference>
<dbReference type="Gene3D" id="3.40.50.800">
    <property type="entry name" value="Anticodon-binding domain"/>
    <property type="match status" value="1"/>
</dbReference>
<dbReference type="Gene3D" id="3.30.930.10">
    <property type="entry name" value="Bira Bifunctional Protein, Domain 2"/>
    <property type="match status" value="1"/>
</dbReference>
<dbReference type="HAMAP" id="MF_00253_A">
    <property type="entry name" value="Gly_tRNA_synth_A"/>
    <property type="match status" value="1"/>
</dbReference>
<dbReference type="InterPro" id="IPR002314">
    <property type="entry name" value="aa-tRNA-synt_IIb"/>
</dbReference>
<dbReference type="InterPro" id="IPR006195">
    <property type="entry name" value="aa-tRNA-synth_II"/>
</dbReference>
<dbReference type="InterPro" id="IPR045864">
    <property type="entry name" value="aa-tRNA-synth_II/BPL/LPL"/>
</dbReference>
<dbReference type="InterPro" id="IPR004154">
    <property type="entry name" value="Anticodon-bd"/>
</dbReference>
<dbReference type="InterPro" id="IPR036621">
    <property type="entry name" value="Anticodon-bd_dom_sf"/>
</dbReference>
<dbReference type="InterPro" id="IPR027031">
    <property type="entry name" value="Gly-tRNA_synthase/POLG2"/>
</dbReference>
<dbReference type="InterPro" id="IPR022960">
    <property type="entry name" value="Gly_tRNA_ligase_arc"/>
</dbReference>
<dbReference type="InterPro" id="IPR033731">
    <property type="entry name" value="GlyRS-like_core"/>
</dbReference>
<dbReference type="InterPro" id="IPR002315">
    <property type="entry name" value="tRNA-synt_gly"/>
</dbReference>
<dbReference type="NCBIfam" id="TIGR00389">
    <property type="entry name" value="glyS_dimeric"/>
    <property type="match status" value="1"/>
</dbReference>
<dbReference type="NCBIfam" id="NF003211">
    <property type="entry name" value="PRK04173.1"/>
    <property type="match status" value="1"/>
</dbReference>
<dbReference type="PANTHER" id="PTHR10745:SF0">
    <property type="entry name" value="GLYCINE--TRNA LIGASE"/>
    <property type="match status" value="1"/>
</dbReference>
<dbReference type="PANTHER" id="PTHR10745">
    <property type="entry name" value="GLYCYL-TRNA SYNTHETASE/DNA POLYMERASE SUBUNIT GAMMA-2"/>
    <property type="match status" value="1"/>
</dbReference>
<dbReference type="Pfam" id="PF03129">
    <property type="entry name" value="HGTP_anticodon"/>
    <property type="match status" value="1"/>
</dbReference>
<dbReference type="Pfam" id="PF00587">
    <property type="entry name" value="tRNA-synt_2b"/>
    <property type="match status" value="1"/>
</dbReference>
<dbReference type="PRINTS" id="PR01043">
    <property type="entry name" value="TRNASYNTHGLY"/>
</dbReference>
<dbReference type="SUPFAM" id="SSF52954">
    <property type="entry name" value="Class II aaRS ABD-related"/>
    <property type="match status" value="1"/>
</dbReference>
<dbReference type="SUPFAM" id="SSF55681">
    <property type="entry name" value="Class II aaRS and biotin synthetases"/>
    <property type="match status" value="1"/>
</dbReference>
<dbReference type="PROSITE" id="PS50862">
    <property type="entry name" value="AA_TRNA_LIGASE_II"/>
    <property type="match status" value="1"/>
</dbReference>
<organism>
    <name type="scientific">Methanococcus maripaludis (strain C6 / ATCC BAA-1332)</name>
    <dbReference type="NCBI Taxonomy" id="444158"/>
    <lineage>
        <taxon>Archaea</taxon>
        <taxon>Methanobacteriati</taxon>
        <taxon>Methanobacteriota</taxon>
        <taxon>Methanomada group</taxon>
        <taxon>Methanococci</taxon>
        <taxon>Methanococcales</taxon>
        <taxon>Methanococcaceae</taxon>
        <taxon>Methanococcus</taxon>
    </lineage>
</organism>
<proteinExistence type="inferred from homology"/>
<reference key="1">
    <citation type="submission" date="2007-10" db="EMBL/GenBank/DDBJ databases">
        <title>Complete sequence of Methanococcus maripaludis C6.</title>
        <authorList>
            <consortium name="US DOE Joint Genome Institute"/>
            <person name="Copeland A."/>
            <person name="Lucas S."/>
            <person name="Lapidus A."/>
            <person name="Barry K."/>
            <person name="Glavina del Rio T."/>
            <person name="Dalin E."/>
            <person name="Tice H."/>
            <person name="Pitluck S."/>
            <person name="Clum A."/>
            <person name="Schmutz J."/>
            <person name="Larimer F."/>
            <person name="Land M."/>
            <person name="Hauser L."/>
            <person name="Kyrpides N."/>
            <person name="Mikhailova N."/>
            <person name="Sieprawska-Lupa M."/>
            <person name="Whitman W.B."/>
            <person name="Richardson P."/>
        </authorList>
    </citation>
    <scope>NUCLEOTIDE SEQUENCE [LARGE SCALE GENOMIC DNA]</scope>
    <source>
        <strain>C6 / ATCC BAA-1332</strain>
    </source>
</reference>
<comment type="function">
    <text evidence="1">Catalyzes the attachment of glycine to tRNA(Gly).</text>
</comment>
<comment type="catalytic activity">
    <reaction evidence="1">
        <text>tRNA(Gly) + glycine + ATP = glycyl-tRNA(Gly) + AMP + diphosphate</text>
        <dbReference type="Rhea" id="RHEA:16013"/>
        <dbReference type="Rhea" id="RHEA-COMP:9664"/>
        <dbReference type="Rhea" id="RHEA-COMP:9683"/>
        <dbReference type="ChEBI" id="CHEBI:30616"/>
        <dbReference type="ChEBI" id="CHEBI:33019"/>
        <dbReference type="ChEBI" id="CHEBI:57305"/>
        <dbReference type="ChEBI" id="CHEBI:78442"/>
        <dbReference type="ChEBI" id="CHEBI:78522"/>
        <dbReference type="ChEBI" id="CHEBI:456215"/>
        <dbReference type="EC" id="6.1.1.14"/>
    </reaction>
</comment>
<comment type="subcellular location">
    <subcellularLocation>
        <location evidence="1">Cytoplasm</location>
    </subcellularLocation>
</comment>
<comment type="similarity">
    <text evidence="1">Belongs to the class-II aminoacyl-tRNA synthetase family.</text>
</comment>
<feature type="chain" id="PRO_1000101168" description="Glycine--tRNA ligase">
    <location>
        <begin position="1"/>
        <end position="574"/>
    </location>
</feature>
<feature type="binding site" evidence="1">
    <location>
        <position position="96"/>
    </location>
    <ligand>
        <name>substrate</name>
    </ligand>
</feature>
<feature type="binding site" evidence="1">
    <location>
        <position position="162"/>
    </location>
    <ligand>
        <name>substrate</name>
    </ligand>
</feature>
<feature type="binding site" evidence="1">
    <location>
        <begin position="194"/>
        <end position="196"/>
    </location>
    <ligand>
        <name>ATP</name>
        <dbReference type="ChEBI" id="CHEBI:30616"/>
    </ligand>
</feature>
<feature type="binding site" evidence="1">
    <location>
        <begin position="204"/>
        <end position="209"/>
    </location>
    <ligand>
        <name>ATP</name>
        <dbReference type="ChEBI" id="CHEBI:30616"/>
    </ligand>
</feature>
<feature type="binding site" evidence="1">
    <location>
        <begin position="209"/>
        <end position="213"/>
    </location>
    <ligand>
        <name>substrate</name>
    </ligand>
</feature>
<feature type="binding site" evidence="1">
    <location>
        <begin position="327"/>
        <end position="328"/>
    </location>
    <ligand>
        <name>ATP</name>
        <dbReference type="ChEBI" id="CHEBI:30616"/>
    </ligand>
</feature>
<feature type="binding site" evidence="1">
    <location>
        <begin position="446"/>
        <end position="450"/>
    </location>
    <ligand>
        <name>substrate</name>
    </ligand>
</feature>
<feature type="binding site" evidence="1">
    <location>
        <begin position="450"/>
        <end position="453"/>
    </location>
    <ligand>
        <name>ATP</name>
        <dbReference type="ChEBI" id="CHEBI:30616"/>
    </ligand>
</feature>